<dbReference type="EC" id="6.1.1.17" evidence="1"/>
<dbReference type="EMBL" id="BA000012">
    <property type="protein sequence ID" value="BAB48322.1"/>
    <property type="molecule type" value="Genomic_DNA"/>
</dbReference>
<dbReference type="RefSeq" id="WP_010909677.1">
    <property type="nucleotide sequence ID" value="NC_002678.2"/>
</dbReference>
<dbReference type="SMR" id="Q98LZ1"/>
<dbReference type="KEGG" id="mlo:mll0813"/>
<dbReference type="PATRIC" id="fig|266835.9.peg.647"/>
<dbReference type="eggNOG" id="COG0008">
    <property type="taxonomic scope" value="Bacteria"/>
</dbReference>
<dbReference type="HOGENOM" id="CLU_015768_6_1_5"/>
<dbReference type="Proteomes" id="UP000000552">
    <property type="component" value="Chromosome"/>
</dbReference>
<dbReference type="GO" id="GO:0005737">
    <property type="term" value="C:cytoplasm"/>
    <property type="evidence" value="ECO:0007669"/>
    <property type="project" value="UniProtKB-SubCell"/>
</dbReference>
<dbReference type="GO" id="GO:0005524">
    <property type="term" value="F:ATP binding"/>
    <property type="evidence" value="ECO:0007669"/>
    <property type="project" value="UniProtKB-UniRule"/>
</dbReference>
<dbReference type="GO" id="GO:0004818">
    <property type="term" value="F:glutamate-tRNA ligase activity"/>
    <property type="evidence" value="ECO:0007669"/>
    <property type="project" value="UniProtKB-UniRule"/>
</dbReference>
<dbReference type="GO" id="GO:0000049">
    <property type="term" value="F:tRNA binding"/>
    <property type="evidence" value="ECO:0007669"/>
    <property type="project" value="InterPro"/>
</dbReference>
<dbReference type="GO" id="GO:0008270">
    <property type="term" value="F:zinc ion binding"/>
    <property type="evidence" value="ECO:0007669"/>
    <property type="project" value="InterPro"/>
</dbReference>
<dbReference type="GO" id="GO:0006424">
    <property type="term" value="P:glutamyl-tRNA aminoacylation"/>
    <property type="evidence" value="ECO:0007669"/>
    <property type="project" value="UniProtKB-UniRule"/>
</dbReference>
<dbReference type="CDD" id="cd00808">
    <property type="entry name" value="GluRS_core"/>
    <property type="match status" value="1"/>
</dbReference>
<dbReference type="Gene3D" id="1.10.10.350">
    <property type="match status" value="1"/>
</dbReference>
<dbReference type="Gene3D" id="3.40.50.620">
    <property type="entry name" value="HUPs"/>
    <property type="match status" value="1"/>
</dbReference>
<dbReference type="HAMAP" id="MF_00022">
    <property type="entry name" value="Glu_tRNA_synth_type1"/>
    <property type="match status" value="1"/>
</dbReference>
<dbReference type="InterPro" id="IPR045462">
    <property type="entry name" value="aa-tRNA-synth_I_cd-bd"/>
</dbReference>
<dbReference type="InterPro" id="IPR020751">
    <property type="entry name" value="aa-tRNA-synth_I_codon-bd_sub2"/>
</dbReference>
<dbReference type="InterPro" id="IPR001412">
    <property type="entry name" value="aa-tRNA-synth_I_CS"/>
</dbReference>
<dbReference type="InterPro" id="IPR008925">
    <property type="entry name" value="aa_tRNA-synth_I_cd-bd_sf"/>
</dbReference>
<dbReference type="InterPro" id="IPR004527">
    <property type="entry name" value="Glu-tRNA-ligase_bac/mito"/>
</dbReference>
<dbReference type="InterPro" id="IPR000924">
    <property type="entry name" value="Glu/Gln-tRNA-synth"/>
</dbReference>
<dbReference type="InterPro" id="IPR020058">
    <property type="entry name" value="Glu/Gln-tRNA-synth_Ib_cat-dom"/>
</dbReference>
<dbReference type="InterPro" id="IPR049940">
    <property type="entry name" value="GluQ/Sye"/>
</dbReference>
<dbReference type="InterPro" id="IPR033910">
    <property type="entry name" value="GluRS_core"/>
</dbReference>
<dbReference type="InterPro" id="IPR014729">
    <property type="entry name" value="Rossmann-like_a/b/a_fold"/>
</dbReference>
<dbReference type="PANTHER" id="PTHR43311">
    <property type="entry name" value="GLUTAMATE--TRNA LIGASE"/>
    <property type="match status" value="1"/>
</dbReference>
<dbReference type="PANTHER" id="PTHR43311:SF2">
    <property type="entry name" value="GLUTAMATE--TRNA LIGASE, MITOCHONDRIAL-RELATED"/>
    <property type="match status" value="1"/>
</dbReference>
<dbReference type="Pfam" id="PF19269">
    <property type="entry name" value="Anticodon_2"/>
    <property type="match status" value="1"/>
</dbReference>
<dbReference type="Pfam" id="PF00749">
    <property type="entry name" value="tRNA-synt_1c"/>
    <property type="match status" value="1"/>
</dbReference>
<dbReference type="PRINTS" id="PR00987">
    <property type="entry name" value="TRNASYNTHGLU"/>
</dbReference>
<dbReference type="SUPFAM" id="SSF48163">
    <property type="entry name" value="An anticodon-binding domain of class I aminoacyl-tRNA synthetases"/>
    <property type="match status" value="1"/>
</dbReference>
<dbReference type="SUPFAM" id="SSF52374">
    <property type="entry name" value="Nucleotidylyl transferase"/>
    <property type="match status" value="1"/>
</dbReference>
<dbReference type="PROSITE" id="PS00178">
    <property type="entry name" value="AA_TRNA_LIGASE_I"/>
    <property type="match status" value="1"/>
</dbReference>
<name>SYE2_RHILO</name>
<proteinExistence type="inferred from homology"/>
<accession>Q98LZ1</accession>
<comment type="function">
    <text evidence="1">Catalyzes the attachment of glutamate to tRNA(Glu) in a two-step reaction: glutamate is first activated by ATP to form Glu-AMP and then transferred to the acceptor end of tRNA(Glu).</text>
</comment>
<comment type="catalytic activity">
    <reaction evidence="1">
        <text>tRNA(Glu) + L-glutamate + ATP = L-glutamyl-tRNA(Glu) + AMP + diphosphate</text>
        <dbReference type="Rhea" id="RHEA:23540"/>
        <dbReference type="Rhea" id="RHEA-COMP:9663"/>
        <dbReference type="Rhea" id="RHEA-COMP:9680"/>
        <dbReference type="ChEBI" id="CHEBI:29985"/>
        <dbReference type="ChEBI" id="CHEBI:30616"/>
        <dbReference type="ChEBI" id="CHEBI:33019"/>
        <dbReference type="ChEBI" id="CHEBI:78442"/>
        <dbReference type="ChEBI" id="CHEBI:78520"/>
        <dbReference type="ChEBI" id="CHEBI:456215"/>
        <dbReference type="EC" id="6.1.1.17"/>
    </reaction>
</comment>
<comment type="subunit">
    <text evidence="1">Monomer.</text>
</comment>
<comment type="subcellular location">
    <subcellularLocation>
        <location evidence="1">Cytoplasm</location>
    </subcellularLocation>
</comment>
<comment type="similarity">
    <text evidence="1">Belongs to the class-I aminoacyl-tRNA synthetase family. Glutamate--tRNA ligase type 1 subfamily.</text>
</comment>
<sequence>MTVTVRFAPSPTGRIHIGNARTALFNWLFALNNKGRFIQRFDDTDIGRSKQEFADAILYDLHWLGIFPDATEYQSRRFEVYDAAVERLKAAGVLYACYETPEELDLRRKVRRTRGLPPVYGREALALTHEQVAEYQADGRRPHWRFLLPNFTGDPLQPERTEVHWKDLVRGEETVDLASLSDPVLVREDGTYLYTLPSVVDDIEMGVSHVIRGDDHVTNTGVQIALFKALGTEPPVFGHHNLLTTVSGEGLSKRTGALSIESLREDGIEPMAVASLAVLVGTSENVAAAHDLTELAGHFDPAATSKSSAKFDPDELFVLNRVLMHHMPFDEARDRLMVLGISGEQAEPFWLAVRGNLDRLADAVGWWRILREGPQDRPEFSDDDRDFLGQAFEVLPEEPWNGTVWKDWTGKIREATGRKGKGLFMPLRLALTGLPSGPELADLLPLMGREGTLARRP</sequence>
<gene>
    <name evidence="1" type="primary">gltX2</name>
    <name type="ordered locus">mll0813</name>
</gene>
<organism>
    <name type="scientific">Mesorhizobium japonicum (strain LMG 29417 / CECT 9101 / MAFF 303099)</name>
    <name type="common">Mesorhizobium loti (strain MAFF 303099)</name>
    <dbReference type="NCBI Taxonomy" id="266835"/>
    <lineage>
        <taxon>Bacteria</taxon>
        <taxon>Pseudomonadati</taxon>
        <taxon>Pseudomonadota</taxon>
        <taxon>Alphaproteobacteria</taxon>
        <taxon>Hyphomicrobiales</taxon>
        <taxon>Phyllobacteriaceae</taxon>
        <taxon>Mesorhizobium</taxon>
    </lineage>
</organism>
<protein>
    <recommendedName>
        <fullName evidence="1">Glutamate--tRNA ligase 2</fullName>
        <ecNumber evidence="1">6.1.1.17</ecNumber>
    </recommendedName>
    <alternativeName>
        <fullName evidence="1">Glutamyl-tRNA synthetase 2</fullName>
        <shortName evidence="1">GluRS 2</shortName>
    </alternativeName>
</protein>
<keyword id="KW-0030">Aminoacyl-tRNA synthetase</keyword>
<keyword id="KW-0067">ATP-binding</keyword>
<keyword id="KW-0963">Cytoplasm</keyword>
<keyword id="KW-0436">Ligase</keyword>
<keyword id="KW-0547">Nucleotide-binding</keyword>
<keyword id="KW-0648">Protein biosynthesis</keyword>
<reference key="1">
    <citation type="journal article" date="2000" name="DNA Res.">
        <title>Complete genome structure of the nitrogen-fixing symbiotic bacterium Mesorhizobium loti.</title>
        <authorList>
            <person name="Kaneko T."/>
            <person name="Nakamura Y."/>
            <person name="Sato S."/>
            <person name="Asamizu E."/>
            <person name="Kato T."/>
            <person name="Sasamoto S."/>
            <person name="Watanabe A."/>
            <person name="Idesawa K."/>
            <person name="Ishikawa A."/>
            <person name="Kawashima K."/>
            <person name="Kimura T."/>
            <person name="Kishida Y."/>
            <person name="Kiyokawa C."/>
            <person name="Kohara M."/>
            <person name="Matsumoto M."/>
            <person name="Matsuno A."/>
            <person name="Mochizuki Y."/>
            <person name="Nakayama S."/>
            <person name="Nakazaki N."/>
            <person name="Shimpo S."/>
            <person name="Sugimoto M."/>
            <person name="Takeuchi C."/>
            <person name="Yamada M."/>
            <person name="Tabata S."/>
        </authorList>
    </citation>
    <scope>NUCLEOTIDE SEQUENCE [LARGE SCALE GENOMIC DNA]</scope>
    <source>
        <strain>LMG 29417 / CECT 9101 / MAFF 303099</strain>
    </source>
</reference>
<feature type="chain" id="PRO_0000119632" description="Glutamate--tRNA ligase 2">
    <location>
        <begin position="1"/>
        <end position="457"/>
    </location>
</feature>
<feature type="short sequence motif" description="'HIGH' region" evidence="1">
    <location>
        <begin position="9"/>
        <end position="19"/>
    </location>
</feature>
<feature type="short sequence motif" description="'KMSKS' region" evidence="1">
    <location>
        <begin position="250"/>
        <end position="254"/>
    </location>
</feature>
<feature type="binding site" evidence="1">
    <location>
        <position position="253"/>
    </location>
    <ligand>
        <name>ATP</name>
        <dbReference type="ChEBI" id="CHEBI:30616"/>
    </ligand>
</feature>
<evidence type="ECO:0000255" key="1">
    <source>
        <dbReference type="HAMAP-Rule" id="MF_00022"/>
    </source>
</evidence>